<protein>
    <recommendedName>
        <fullName evidence="1">Ribonuclease HII</fullName>
        <shortName evidence="1">RNase HII</shortName>
        <ecNumber evidence="1">3.1.26.4</ecNumber>
    </recommendedName>
</protein>
<accession>Q4USP6</accession>
<reference key="1">
    <citation type="journal article" date="2005" name="Genome Res.">
        <title>Comparative and functional genomic analyses of the pathogenicity of phytopathogen Xanthomonas campestris pv. campestris.</title>
        <authorList>
            <person name="Qian W."/>
            <person name="Jia Y."/>
            <person name="Ren S.-X."/>
            <person name="He Y.-Q."/>
            <person name="Feng J.-X."/>
            <person name="Lu L.-F."/>
            <person name="Sun Q."/>
            <person name="Ying G."/>
            <person name="Tang D.-J."/>
            <person name="Tang H."/>
            <person name="Wu W."/>
            <person name="Hao P."/>
            <person name="Wang L."/>
            <person name="Jiang B.-L."/>
            <person name="Zeng S."/>
            <person name="Gu W.-Y."/>
            <person name="Lu G."/>
            <person name="Rong L."/>
            <person name="Tian Y."/>
            <person name="Yao Z."/>
            <person name="Fu G."/>
            <person name="Chen B."/>
            <person name="Fang R."/>
            <person name="Qiang B."/>
            <person name="Chen Z."/>
            <person name="Zhao G.-P."/>
            <person name="Tang J.-L."/>
            <person name="He C."/>
        </authorList>
    </citation>
    <scope>NUCLEOTIDE SEQUENCE [LARGE SCALE GENOMIC DNA]</scope>
    <source>
        <strain>8004</strain>
    </source>
</reference>
<sequence>MTRSSSDRAIVVPAAQNALFTDSPFPTPESRLIAGVDEAGRGPLAGPVAVAAVVFDPAKPRINGLDDSKQLSAERREQLYARIVDRALAWSVVLIDSEEIDRINIYQATMLGMRRAVEGVAHVAGFARIDGNRVPKGLPCPAEALIGGDALDRAIMAASIVAKVTRDRLMRELHAQHPQYRFDLHKGYSTPAHLAALQTHGPCPQHRRSFAPVRRALGLETAQTAWDVPCAPADGLLLAE</sequence>
<dbReference type="EC" id="3.1.26.4" evidence="1"/>
<dbReference type="EMBL" id="CP000050">
    <property type="protein sequence ID" value="AAY49927.1"/>
    <property type="molecule type" value="Genomic_DNA"/>
</dbReference>
<dbReference type="RefSeq" id="WP_011036551.1">
    <property type="nucleotide sequence ID" value="NZ_CP155948.1"/>
</dbReference>
<dbReference type="SMR" id="Q4USP6"/>
<dbReference type="KEGG" id="xcb:XC_2879"/>
<dbReference type="HOGENOM" id="CLU_036532_3_2_6"/>
<dbReference type="Proteomes" id="UP000000420">
    <property type="component" value="Chromosome"/>
</dbReference>
<dbReference type="GO" id="GO:0005737">
    <property type="term" value="C:cytoplasm"/>
    <property type="evidence" value="ECO:0007669"/>
    <property type="project" value="UniProtKB-SubCell"/>
</dbReference>
<dbReference type="GO" id="GO:0032299">
    <property type="term" value="C:ribonuclease H2 complex"/>
    <property type="evidence" value="ECO:0007669"/>
    <property type="project" value="TreeGrafter"/>
</dbReference>
<dbReference type="GO" id="GO:0030145">
    <property type="term" value="F:manganese ion binding"/>
    <property type="evidence" value="ECO:0007669"/>
    <property type="project" value="UniProtKB-UniRule"/>
</dbReference>
<dbReference type="GO" id="GO:0003723">
    <property type="term" value="F:RNA binding"/>
    <property type="evidence" value="ECO:0007669"/>
    <property type="project" value="InterPro"/>
</dbReference>
<dbReference type="GO" id="GO:0004523">
    <property type="term" value="F:RNA-DNA hybrid ribonuclease activity"/>
    <property type="evidence" value="ECO:0007669"/>
    <property type="project" value="UniProtKB-UniRule"/>
</dbReference>
<dbReference type="GO" id="GO:0043137">
    <property type="term" value="P:DNA replication, removal of RNA primer"/>
    <property type="evidence" value="ECO:0007669"/>
    <property type="project" value="TreeGrafter"/>
</dbReference>
<dbReference type="GO" id="GO:0006298">
    <property type="term" value="P:mismatch repair"/>
    <property type="evidence" value="ECO:0007669"/>
    <property type="project" value="TreeGrafter"/>
</dbReference>
<dbReference type="CDD" id="cd07182">
    <property type="entry name" value="RNase_HII_bacteria_HII_like"/>
    <property type="match status" value="1"/>
</dbReference>
<dbReference type="FunFam" id="3.30.420.10:FF:000142">
    <property type="entry name" value="Ribonuclease HII"/>
    <property type="match status" value="1"/>
</dbReference>
<dbReference type="Gene3D" id="3.30.420.10">
    <property type="entry name" value="Ribonuclease H-like superfamily/Ribonuclease H"/>
    <property type="match status" value="1"/>
</dbReference>
<dbReference type="HAMAP" id="MF_00052_B">
    <property type="entry name" value="RNase_HII_B"/>
    <property type="match status" value="1"/>
</dbReference>
<dbReference type="InterPro" id="IPR022898">
    <property type="entry name" value="RNase_HII"/>
</dbReference>
<dbReference type="InterPro" id="IPR001352">
    <property type="entry name" value="RNase_HII/HIII"/>
</dbReference>
<dbReference type="InterPro" id="IPR024567">
    <property type="entry name" value="RNase_HII/HIII_dom"/>
</dbReference>
<dbReference type="InterPro" id="IPR012337">
    <property type="entry name" value="RNaseH-like_sf"/>
</dbReference>
<dbReference type="InterPro" id="IPR036397">
    <property type="entry name" value="RNaseH_sf"/>
</dbReference>
<dbReference type="NCBIfam" id="NF000595">
    <property type="entry name" value="PRK00015.1-3"/>
    <property type="match status" value="1"/>
</dbReference>
<dbReference type="PANTHER" id="PTHR10954">
    <property type="entry name" value="RIBONUCLEASE H2 SUBUNIT A"/>
    <property type="match status" value="1"/>
</dbReference>
<dbReference type="PANTHER" id="PTHR10954:SF18">
    <property type="entry name" value="RIBONUCLEASE HII"/>
    <property type="match status" value="1"/>
</dbReference>
<dbReference type="Pfam" id="PF01351">
    <property type="entry name" value="RNase_HII"/>
    <property type="match status" value="1"/>
</dbReference>
<dbReference type="SUPFAM" id="SSF53098">
    <property type="entry name" value="Ribonuclease H-like"/>
    <property type="match status" value="1"/>
</dbReference>
<dbReference type="PROSITE" id="PS51975">
    <property type="entry name" value="RNASE_H_2"/>
    <property type="match status" value="1"/>
</dbReference>
<keyword id="KW-0963">Cytoplasm</keyword>
<keyword id="KW-0255">Endonuclease</keyword>
<keyword id="KW-0378">Hydrolase</keyword>
<keyword id="KW-0464">Manganese</keyword>
<keyword id="KW-0479">Metal-binding</keyword>
<keyword id="KW-0540">Nuclease</keyword>
<proteinExistence type="inferred from homology"/>
<comment type="function">
    <text evidence="1">Endonuclease that specifically degrades the RNA of RNA-DNA hybrids.</text>
</comment>
<comment type="catalytic activity">
    <reaction evidence="1">
        <text>Endonucleolytic cleavage to 5'-phosphomonoester.</text>
        <dbReference type="EC" id="3.1.26.4"/>
    </reaction>
</comment>
<comment type="cofactor">
    <cofactor evidence="1">
        <name>Mn(2+)</name>
        <dbReference type="ChEBI" id="CHEBI:29035"/>
    </cofactor>
    <cofactor evidence="1">
        <name>Mg(2+)</name>
        <dbReference type="ChEBI" id="CHEBI:18420"/>
    </cofactor>
    <text evidence="1">Manganese or magnesium. Binds 1 divalent metal ion per monomer in the absence of substrate. May bind a second metal ion after substrate binding.</text>
</comment>
<comment type="subcellular location">
    <subcellularLocation>
        <location evidence="1">Cytoplasm</location>
    </subcellularLocation>
</comment>
<comment type="similarity">
    <text evidence="1">Belongs to the RNase HII family.</text>
</comment>
<feature type="chain" id="PRO_0000235789" description="Ribonuclease HII">
    <location>
        <begin position="1"/>
        <end position="240"/>
    </location>
</feature>
<feature type="domain" description="RNase H type-2" evidence="2">
    <location>
        <begin position="31"/>
        <end position="222"/>
    </location>
</feature>
<feature type="binding site" evidence="1">
    <location>
        <position position="37"/>
    </location>
    <ligand>
        <name>a divalent metal cation</name>
        <dbReference type="ChEBI" id="CHEBI:60240"/>
    </ligand>
</feature>
<feature type="binding site" evidence="1">
    <location>
        <position position="38"/>
    </location>
    <ligand>
        <name>a divalent metal cation</name>
        <dbReference type="ChEBI" id="CHEBI:60240"/>
    </ligand>
</feature>
<feature type="binding site" evidence="1">
    <location>
        <position position="130"/>
    </location>
    <ligand>
        <name>a divalent metal cation</name>
        <dbReference type="ChEBI" id="CHEBI:60240"/>
    </ligand>
</feature>
<organism>
    <name type="scientific">Xanthomonas campestris pv. campestris (strain 8004)</name>
    <dbReference type="NCBI Taxonomy" id="314565"/>
    <lineage>
        <taxon>Bacteria</taxon>
        <taxon>Pseudomonadati</taxon>
        <taxon>Pseudomonadota</taxon>
        <taxon>Gammaproteobacteria</taxon>
        <taxon>Lysobacterales</taxon>
        <taxon>Lysobacteraceae</taxon>
        <taxon>Xanthomonas</taxon>
    </lineage>
</organism>
<name>RNH2_XANC8</name>
<evidence type="ECO:0000255" key="1">
    <source>
        <dbReference type="HAMAP-Rule" id="MF_00052"/>
    </source>
</evidence>
<evidence type="ECO:0000255" key="2">
    <source>
        <dbReference type="PROSITE-ProRule" id="PRU01319"/>
    </source>
</evidence>
<gene>
    <name evidence="1" type="primary">rnhB</name>
    <name type="ordered locus">XC_2879</name>
</gene>